<reference key="1">
    <citation type="journal article" date="2003" name="Proc. Natl. Acad. Sci. U.S.A.">
        <title>The complete genome sequence of Mycobacterium bovis.</title>
        <authorList>
            <person name="Garnier T."/>
            <person name="Eiglmeier K."/>
            <person name="Camus J.-C."/>
            <person name="Medina N."/>
            <person name="Mansoor H."/>
            <person name="Pryor M."/>
            <person name="Duthoy S."/>
            <person name="Grondin S."/>
            <person name="Lacroix C."/>
            <person name="Monsempe C."/>
            <person name="Simon S."/>
            <person name="Harris B."/>
            <person name="Atkin R."/>
            <person name="Doggett J."/>
            <person name="Mayes R."/>
            <person name="Keating L."/>
            <person name="Wheeler P.R."/>
            <person name="Parkhill J."/>
            <person name="Barrell B.G."/>
            <person name="Cole S.T."/>
            <person name="Gordon S.V."/>
            <person name="Hewinson R.G."/>
        </authorList>
    </citation>
    <scope>NUCLEOTIDE SEQUENCE [LARGE SCALE GENOMIC DNA]</scope>
    <source>
        <strain>ATCC BAA-935 / AF2122/97</strain>
    </source>
</reference>
<reference key="2">
    <citation type="journal article" date="2017" name="Genome Announc.">
        <title>Updated reference genome sequence and annotation of Mycobacterium bovis AF2122/97.</title>
        <authorList>
            <person name="Malone K.M."/>
            <person name="Farrell D."/>
            <person name="Stuber T.P."/>
            <person name="Schubert O.T."/>
            <person name="Aebersold R."/>
            <person name="Robbe-Austerman S."/>
            <person name="Gordon S.V."/>
        </authorList>
    </citation>
    <scope>NUCLEOTIDE SEQUENCE [LARGE SCALE GENOMIC DNA]</scope>
    <scope>GENOME REANNOTATION</scope>
    <source>
        <strain>ATCC BAA-935 / AF2122/97</strain>
    </source>
</reference>
<organism>
    <name type="scientific">Mycobacterium bovis (strain ATCC BAA-935 / AF2122/97)</name>
    <dbReference type="NCBI Taxonomy" id="233413"/>
    <lineage>
        <taxon>Bacteria</taxon>
        <taxon>Bacillati</taxon>
        <taxon>Actinomycetota</taxon>
        <taxon>Actinomycetes</taxon>
        <taxon>Mycobacteriales</taxon>
        <taxon>Mycobacteriaceae</taxon>
        <taxon>Mycobacterium</taxon>
        <taxon>Mycobacterium tuberculosis complex</taxon>
    </lineage>
</organism>
<protein>
    <recommendedName>
        <fullName>PhoH-like protein</fullName>
    </recommendedName>
</protein>
<evidence type="ECO:0000255" key="1"/>
<evidence type="ECO:0000256" key="2">
    <source>
        <dbReference type="SAM" id="MobiDB-lite"/>
    </source>
</evidence>
<evidence type="ECO:0000305" key="3"/>
<feature type="chain" id="PRO_0000201159" description="PhoH-like protein">
    <location>
        <begin position="1"/>
        <end position="352"/>
    </location>
</feature>
<feature type="region of interest" description="Disordered" evidence="2">
    <location>
        <begin position="1"/>
        <end position="21"/>
    </location>
</feature>
<feature type="compositionally biased region" description="Low complexity" evidence="2">
    <location>
        <begin position="9"/>
        <end position="20"/>
    </location>
</feature>
<feature type="binding site" evidence="1">
    <location>
        <begin position="150"/>
        <end position="157"/>
    </location>
    <ligand>
        <name>ATP</name>
        <dbReference type="ChEBI" id="CHEBI:30616"/>
    </ligand>
</feature>
<gene>
    <name type="ordered locus">BQ2027_MB2389C</name>
</gene>
<accession>P0A5S1</accession>
<accession>A0A1R3Y110</accession>
<accession>O05830</accession>
<accession>X2BK92</accession>
<name>PHOL_MYCBO</name>
<sequence>MTSRETRAADAAGARQADAQVRSSIDVPPDLVVGLLGSADENLRALERTLSADLHVRGNAVTLCGEPADVALAERVISELIAIVASGQSLTPEVVRHSVAMLVGTGNESPAEVLTLDILSRRGKTIRPKTLNQKRYVDAIDANTIVFGIGPAGTGKTYLAMAKAVHALQTKQVTRIILTRPAVEAGERLGFLPGTLSEKIDPYLRPLYDALYDMMDPELIPKLMSAGVIEVAPLAYMRGRTLNDAFIVLDEAQNTTAEQMKMFLTRLGFGSKVVVTGDVTQIDLPGGARSGLRAAVDILEDIDDIHIAELTSVDVVRHRLVSEIVDAYARYEEPGSGLNRAARRASGARGRR</sequence>
<comment type="subcellular location">
    <subcellularLocation>
        <location evidence="3">Cytoplasm</location>
    </subcellularLocation>
</comment>
<comment type="similarity">
    <text evidence="3">Belongs to the PhoH family.</text>
</comment>
<proteinExistence type="inferred from homology"/>
<dbReference type="EMBL" id="LT708304">
    <property type="protein sequence ID" value="SIU01001.1"/>
    <property type="molecule type" value="Genomic_DNA"/>
</dbReference>
<dbReference type="RefSeq" id="NP_856038.1">
    <property type="nucleotide sequence ID" value="NC_002945.3"/>
</dbReference>
<dbReference type="RefSeq" id="WP_003412235.1">
    <property type="nucleotide sequence ID" value="NC_002945.4"/>
</dbReference>
<dbReference type="SMR" id="P0A5S1"/>
<dbReference type="KEGG" id="mbo:BQ2027_MB2389C"/>
<dbReference type="PATRIC" id="fig|233413.5.peg.2624"/>
<dbReference type="Proteomes" id="UP000001419">
    <property type="component" value="Chromosome"/>
</dbReference>
<dbReference type="GO" id="GO:0005829">
    <property type="term" value="C:cytosol"/>
    <property type="evidence" value="ECO:0007669"/>
    <property type="project" value="TreeGrafter"/>
</dbReference>
<dbReference type="GO" id="GO:0005524">
    <property type="term" value="F:ATP binding"/>
    <property type="evidence" value="ECO:0007669"/>
    <property type="project" value="UniProtKB-KW"/>
</dbReference>
<dbReference type="GO" id="GO:0003723">
    <property type="term" value="F:RNA binding"/>
    <property type="evidence" value="ECO:0007669"/>
    <property type="project" value="InterPro"/>
</dbReference>
<dbReference type="FunFam" id="3.40.50.300:FF:000013">
    <property type="entry name" value="PhoH family ATPase"/>
    <property type="match status" value="1"/>
</dbReference>
<dbReference type="Gene3D" id="3.40.50.300">
    <property type="entry name" value="P-loop containing nucleotide triphosphate hydrolases"/>
    <property type="match status" value="1"/>
</dbReference>
<dbReference type="InterPro" id="IPR004087">
    <property type="entry name" value="KH_dom"/>
</dbReference>
<dbReference type="InterPro" id="IPR036612">
    <property type="entry name" value="KH_dom_type_1_sf"/>
</dbReference>
<dbReference type="InterPro" id="IPR027417">
    <property type="entry name" value="P-loop_NTPase"/>
</dbReference>
<dbReference type="InterPro" id="IPR003714">
    <property type="entry name" value="PhoH"/>
</dbReference>
<dbReference type="InterPro" id="IPR051451">
    <property type="entry name" value="PhoH2-like"/>
</dbReference>
<dbReference type="PANTHER" id="PTHR30473:SF1">
    <property type="entry name" value="PHOH-LIKE PROTEIN"/>
    <property type="match status" value="1"/>
</dbReference>
<dbReference type="PANTHER" id="PTHR30473">
    <property type="entry name" value="PROTEIN PHOH"/>
    <property type="match status" value="1"/>
</dbReference>
<dbReference type="Pfam" id="PF02562">
    <property type="entry name" value="PhoH"/>
    <property type="match status" value="1"/>
</dbReference>
<dbReference type="SMART" id="SM00322">
    <property type="entry name" value="KH"/>
    <property type="match status" value="1"/>
</dbReference>
<dbReference type="SUPFAM" id="SSF54791">
    <property type="entry name" value="Eukaryotic type KH-domain (KH-domain type I)"/>
    <property type="match status" value="1"/>
</dbReference>
<dbReference type="SUPFAM" id="SSF52540">
    <property type="entry name" value="P-loop containing nucleoside triphosphate hydrolases"/>
    <property type="match status" value="1"/>
</dbReference>
<keyword id="KW-0067">ATP-binding</keyword>
<keyword id="KW-0963">Cytoplasm</keyword>
<keyword id="KW-0547">Nucleotide-binding</keyword>
<keyword id="KW-1185">Reference proteome</keyword>